<reference key="1">
    <citation type="submission" date="2007-08" db="EMBL/GenBank/DDBJ databases">
        <authorList>
            <consortium name="The Citrobacter koseri Genome Sequencing Project"/>
            <person name="McClelland M."/>
            <person name="Sanderson E.K."/>
            <person name="Porwollik S."/>
            <person name="Spieth J."/>
            <person name="Clifton W.S."/>
            <person name="Latreille P."/>
            <person name="Courtney L."/>
            <person name="Wang C."/>
            <person name="Pepin K."/>
            <person name="Bhonagiri V."/>
            <person name="Nash W."/>
            <person name="Johnson M."/>
            <person name="Thiruvilangam P."/>
            <person name="Wilson R."/>
        </authorList>
    </citation>
    <scope>NUCLEOTIDE SEQUENCE [LARGE SCALE GENOMIC DNA]</scope>
    <source>
        <strain>ATCC BAA-895 / CDC 4225-83 / SGSC4696</strain>
    </source>
</reference>
<sequence length="601" mass="66488">MEGSDLLTAGVMFLFAAVAAVPLASRLGIGAVLGYLLAGIAIGPWGLGFISDVDEILHFSELGVVFLMFIIGLELNPSKLWQLRRSIFGVGAAQVMLSAVVLAGLLMLTDFSWQAAVIGGIGLAMSSTAMALQLMREKGMNRSESGQLGFSVLLFQDLAVIPALALVPLLAGSADEHFDWIKVGMKVLAFAGMLIGGRYLLRPVFRFIADSGVREVFTAATLLLVLGSALFMDALGLSMALGTFIAGVLLAESEYRHELETAIDPFKGLLLGLFFISVGMSLNLGVLYTHLLWVAVSVIVLVAVKTLVLYLLARLYGIRSSERMQFAGVLSQGGEFAFVLFSTASSQRLFQGDQMSLLLVTVTLSMMTTPLLMKLVDKWLSRQLNGPEEEDEKPWVDDDKPQVIVVGFGRFGQVIGRLLMANKMRITVLERDISAVNLMRKYGYKVYYGDATQVELLRSAGAEAAESIVITCNEPEDTMKLVEICRQHFPHLHILARARGRVEAHELLQAGVTQFSRETFSSALELGRKTLVSLGMHPHQAQRAQLHFRRLDMRMLRELIPMHTDMVQISRAREARRELEEIFQREMQQERRQLDGWDEFE</sequence>
<accession>A8AQP0</accession>
<name>KEFB_CITK8</name>
<protein>
    <recommendedName>
        <fullName evidence="1">Glutathione-regulated potassium-efflux system protein KefB</fullName>
    </recommendedName>
    <alternativeName>
        <fullName evidence="1">K(+)/H(+) antiporter</fullName>
    </alternativeName>
</protein>
<dbReference type="EMBL" id="CP000822">
    <property type="protein sequence ID" value="ABV15803.1"/>
    <property type="molecule type" value="Genomic_DNA"/>
</dbReference>
<dbReference type="RefSeq" id="WP_012135445.1">
    <property type="nucleotide sequence ID" value="NC_009792.1"/>
</dbReference>
<dbReference type="SMR" id="A8AQP0"/>
<dbReference type="STRING" id="290338.CKO_04758"/>
<dbReference type="GeneID" id="45138269"/>
<dbReference type="KEGG" id="cko:CKO_04758"/>
<dbReference type="HOGENOM" id="CLU_005126_9_3_6"/>
<dbReference type="OrthoDB" id="9781411at2"/>
<dbReference type="Proteomes" id="UP000008148">
    <property type="component" value="Chromosome"/>
</dbReference>
<dbReference type="GO" id="GO:0005886">
    <property type="term" value="C:plasma membrane"/>
    <property type="evidence" value="ECO:0007669"/>
    <property type="project" value="UniProtKB-SubCell"/>
</dbReference>
<dbReference type="GO" id="GO:0015503">
    <property type="term" value="F:glutathione-regulated potassium exporter activity"/>
    <property type="evidence" value="ECO:0007669"/>
    <property type="project" value="UniProtKB-UniRule"/>
</dbReference>
<dbReference type="GO" id="GO:1902600">
    <property type="term" value="P:proton transmembrane transport"/>
    <property type="evidence" value="ECO:0007669"/>
    <property type="project" value="InterPro"/>
</dbReference>
<dbReference type="FunFam" id="1.20.1530.20:FF:000001">
    <property type="entry name" value="Glutathione-regulated potassium-efflux system protein KefB"/>
    <property type="match status" value="1"/>
</dbReference>
<dbReference type="FunFam" id="3.40.50.720:FF:000036">
    <property type="entry name" value="Glutathione-regulated potassium-efflux system protein KefB"/>
    <property type="match status" value="1"/>
</dbReference>
<dbReference type="Gene3D" id="1.20.1530.20">
    <property type="match status" value="1"/>
</dbReference>
<dbReference type="Gene3D" id="3.40.50.720">
    <property type="entry name" value="NAD(P)-binding Rossmann-like Domain"/>
    <property type="match status" value="1"/>
</dbReference>
<dbReference type="HAMAP" id="MF_01412">
    <property type="entry name" value="K_H_efflux_KefB"/>
    <property type="match status" value="1"/>
</dbReference>
<dbReference type="InterPro" id="IPR006153">
    <property type="entry name" value="Cation/H_exchanger_TM"/>
</dbReference>
<dbReference type="InterPro" id="IPR004771">
    <property type="entry name" value="K/H_exchanger"/>
</dbReference>
<dbReference type="InterPro" id="IPR020884">
    <property type="entry name" value="K_H_efflux_KefB"/>
</dbReference>
<dbReference type="InterPro" id="IPR038770">
    <property type="entry name" value="Na+/solute_symporter_sf"/>
</dbReference>
<dbReference type="InterPro" id="IPR036291">
    <property type="entry name" value="NAD(P)-bd_dom_sf"/>
</dbReference>
<dbReference type="InterPro" id="IPR003148">
    <property type="entry name" value="RCK_N"/>
</dbReference>
<dbReference type="NCBIfam" id="TIGR00932">
    <property type="entry name" value="2a37"/>
    <property type="match status" value="1"/>
</dbReference>
<dbReference type="NCBIfam" id="NF002973">
    <property type="entry name" value="PRK03659.1"/>
    <property type="match status" value="1"/>
</dbReference>
<dbReference type="PANTHER" id="PTHR46157">
    <property type="entry name" value="K(+) EFFLUX ANTIPORTER 3, CHLOROPLASTIC"/>
    <property type="match status" value="1"/>
</dbReference>
<dbReference type="PANTHER" id="PTHR46157:SF4">
    <property type="entry name" value="K(+) EFFLUX ANTIPORTER 3, CHLOROPLASTIC"/>
    <property type="match status" value="1"/>
</dbReference>
<dbReference type="Pfam" id="PF00999">
    <property type="entry name" value="Na_H_Exchanger"/>
    <property type="match status" value="1"/>
</dbReference>
<dbReference type="Pfam" id="PF02254">
    <property type="entry name" value="TrkA_N"/>
    <property type="match status" value="1"/>
</dbReference>
<dbReference type="SUPFAM" id="SSF51735">
    <property type="entry name" value="NAD(P)-binding Rossmann-fold domains"/>
    <property type="match status" value="1"/>
</dbReference>
<dbReference type="PROSITE" id="PS51201">
    <property type="entry name" value="RCK_N"/>
    <property type="match status" value="1"/>
</dbReference>
<comment type="function">
    <text evidence="1">Pore-forming subunit of a potassium efflux system that confers protection against electrophiles. Catalyzes K(+)/H(+) antiport.</text>
</comment>
<comment type="subunit">
    <text evidence="1">Interacts with the regulatory subunit KefG.</text>
</comment>
<comment type="subcellular location">
    <subcellularLocation>
        <location evidence="1">Cell inner membrane</location>
        <topology evidence="1">Multi-pass membrane protein</topology>
    </subcellularLocation>
</comment>
<comment type="similarity">
    <text evidence="1">Belongs to the monovalent cation:proton antiporter 2 (CPA2) transporter (TC 2.A.37) family. KefB subfamily.</text>
</comment>
<evidence type="ECO:0000255" key="1">
    <source>
        <dbReference type="HAMAP-Rule" id="MF_01412"/>
    </source>
</evidence>
<evidence type="ECO:0000255" key="2">
    <source>
        <dbReference type="PROSITE-ProRule" id="PRU00543"/>
    </source>
</evidence>
<feature type="chain" id="PRO_1000068453" description="Glutathione-regulated potassium-efflux system protein KefB">
    <location>
        <begin position="1"/>
        <end position="601"/>
    </location>
</feature>
<feature type="transmembrane region" description="Helical" evidence="1">
    <location>
        <begin position="4"/>
        <end position="24"/>
    </location>
</feature>
<feature type="transmembrane region" description="Helical" evidence="1">
    <location>
        <begin position="29"/>
        <end position="49"/>
    </location>
</feature>
<feature type="transmembrane region" description="Helical" evidence="1">
    <location>
        <begin position="55"/>
        <end position="75"/>
    </location>
</feature>
<feature type="transmembrane region" description="Helical" evidence="1">
    <location>
        <begin position="87"/>
        <end position="107"/>
    </location>
</feature>
<feature type="transmembrane region" description="Helical" evidence="1">
    <location>
        <begin position="115"/>
        <end position="135"/>
    </location>
</feature>
<feature type="transmembrane region" description="Helical" evidence="1">
    <location>
        <begin position="152"/>
        <end position="172"/>
    </location>
</feature>
<feature type="transmembrane region" description="Helical" evidence="1">
    <location>
        <begin position="177"/>
        <end position="197"/>
    </location>
</feature>
<feature type="transmembrane region" description="Helical" evidence="1">
    <location>
        <begin position="207"/>
        <end position="227"/>
    </location>
</feature>
<feature type="transmembrane region" description="Helical" evidence="1">
    <location>
        <begin position="230"/>
        <end position="250"/>
    </location>
</feature>
<feature type="transmembrane region" description="Helical" evidence="1">
    <location>
        <begin position="262"/>
        <end position="282"/>
    </location>
</feature>
<feature type="transmembrane region" description="Helical" evidence="1">
    <location>
        <begin position="284"/>
        <end position="304"/>
    </location>
</feature>
<feature type="transmembrane region" description="Helical" evidence="1">
    <location>
        <begin position="324"/>
        <end position="344"/>
    </location>
</feature>
<feature type="transmembrane region" description="Helical" evidence="1">
    <location>
        <begin position="356"/>
        <end position="376"/>
    </location>
</feature>
<feature type="domain" description="RCK N-terminal" evidence="2">
    <location>
        <begin position="400"/>
        <end position="519"/>
    </location>
</feature>
<gene>
    <name evidence="1" type="primary">kefB</name>
    <name type="ordered locus">CKO_04758</name>
</gene>
<proteinExistence type="inferred from homology"/>
<keyword id="KW-0050">Antiport</keyword>
<keyword id="KW-0997">Cell inner membrane</keyword>
<keyword id="KW-1003">Cell membrane</keyword>
<keyword id="KW-0406">Ion transport</keyword>
<keyword id="KW-0472">Membrane</keyword>
<keyword id="KW-0630">Potassium</keyword>
<keyword id="KW-0633">Potassium transport</keyword>
<keyword id="KW-1185">Reference proteome</keyword>
<keyword id="KW-0812">Transmembrane</keyword>
<keyword id="KW-1133">Transmembrane helix</keyword>
<keyword id="KW-0813">Transport</keyword>
<organism>
    <name type="scientific">Citrobacter koseri (strain ATCC BAA-895 / CDC 4225-83 / SGSC4696)</name>
    <dbReference type="NCBI Taxonomy" id="290338"/>
    <lineage>
        <taxon>Bacteria</taxon>
        <taxon>Pseudomonadati</taxon>
        <taxon>Pseudomonadota</taxon>
        <taxon>Gammaproteobacteria</taxon>
        <taxon>Enterobacterales</taxon>
        <taxon>Enterobacteriaceae</taxon>
        <taxon>Citrobacter</taxon>
    </lineage>
</organism>